<keyword id="KW-0963">Cytoplasm</keyword>
<keyword id="KW-0690">Ribosome biogenesis</keyword>
<comment type="function">
    <text evidence="1">One of several proteins that assist in the late maturation steps of the functional core of the 30S ribosomal subunit. Associates with free 30S ribosomal subunits (but not with 30S subunits that are part of 70S ribosomes or polysomes). Required for efficient processing of 16S rRNA. May interact with the 5'-terminal helix region of 16S rRNA.</text>
</comment>
<comment type="subunit">
    <text evidence="1">Monomer. Binds 30S ribosomal subunits, but not 50S ribosomal subunits or 70S ribosomes.</text>
</comment>
<comment type="subcellular location">
    <subcellularLocation>
        <location evidence="1">Cytoplasm</location>
    </subcellularLocation>
</comment>
<comment type="similarity">
    <text evidence="1">Belongs to the RbfA family.</text>
</comment>
<comment type="sequence caution" evidence="2">
    <conflict type="erroneous initiation">
        <sequence resource="EMBL-CDS" id="ABN83942"/>
    </conflict>
    <text>Extended N-terminus.</text>
</comment>
<organism>
    <name type="scientific">Burkholderia pseudomallei (strain 668)</name>
    <dbReference type="NCBI Taxonomy" id="320373"/>
    <lineage>
        <taxon>Bacteria</taxon>
        <taxon>Pseudomonadati</taxon>
        <taxon>Pseudomonadota</taxon>
        <taxon>Betaproteobacteria</taxon>
        <taxon>Burkholderiales</taxon>
        <taxon>Burkholderiaceae</taxon>
        <taxon>Burkholderia</taxon>
        <taxon>pseudomallei group</taxon>
    </lineage>
</organism>
<protein>
    <recommendedName>
        <fullName evidence="1">Ribosome-binding factor A</fullName>
    </recommendedName>
</protein>
<gene>
    <name evidence="1" type="primary">rbfA</name>
    <name type="ordered locus">BURPS668_1741</name>
</gene>
<accession>A3N8V9</accession>
<proteinExistence type="inferred from homology"/>
<sequence length="122" mass="13808">MSKKRSSPNRNVQIADQIQRDLSELIMREVKDPRIGIVTIQSVELTPDYAHAKVYFTALTGTPADTQEALNHAAGHLHNLLFKRLHIHTVPTLHFHYDQTIEKAVAMSRLIDEANATRAKDD</sequence>
<evidence type="ECO:0000255" key="1">
    <source>
        <dbReference type="HAMAP-Rule" id="MF_00003"/>
    </source>
</evidence>
<evidence type="ECO:0000305" key="2"/>
<dbReference type="EMBL" id="CP000570">
    <property type="protein sequence ID" value="ABN83942.1"/>
    <property type="status" value="ALT_INIT"/>
    <property type="molecule type" value="Genomic_DNA"/>
</dbReference>
<dbReference type="RefSeq" id="WP_004199441.1">
    <property type="nucleotide sequence ID" value="NC_009074.1"/>
</dbReference>
<dbReference type="SMR" id="A3N8V9"/>
<dbReference type="GeneID" id="93060074"/>
<dbReference type="KEGG" id="bpd:BURPS668_1741"/>
<dbReference type="HOGENOM" id="CLU_089475_5_1_4"/>
<dbReference type="GO" id="GO:0005829">
    <property type="term" value="C:cytosol"/>
    <property type="evidence" value="ECO:0007669"/>
    <property type="project" value="TreeGrafter"/>
</dbReference>
<dbReference type="GO" id="GO:0043024">
    <property type="term" value="F:ribosomal small subunit binding"/>
    <property type="evidence" value="ECO:0007669"/>
    <property type="project" value="TreeGrafter"/>
</dbReference>
<dbReference type="GO" id="GO:0030490">
    <property type="term" value="P:maturation of SSU-rRNA"/>
    <property type="evidence" value="ECO:0007669"/>
    <property type="project" value="UniProtKB-UniRule"/>
</dbReference>
<dbReference type="Gene3D" id="3.30.300.20">
    <property type="match status" value="1"/>
</dbReference>
<dbReference type="HAMAP" id="MF_00003">
    <property type="entry name" value="RbfA"/>
    <property type="match status" value="1"/>
</dbReference>
<dbReference type="InterPro" id="IPR015946">
    <property type="entry name" value="KH_dom-like_a/b"/>
</dbReference>
<dbReference type="InterPro" id="IPR000238">
    <property type="entry name" value="RbfA"/>
</dbReference>
<dbReference type="InterPro" id="IPR023799">
    <property type="entry name" value="RbfA_dom_sf"/>
</dbReference>
<dbReference type="NCBIfam" id="TIGR00082">
    <property type="entry name" value="rbfA"/>
    <property type="match status" value="1"/>
</dbReference>
<dbReference type="PANTHER" id="PTHR33515">
    <property type="entry name" value="RIBOSOME-BINDING FACTOR A, CHLOROPLASTIC-RELATED"/>
    <property type="match status" value="1"/>
</dbReference>
<dbReference type="PANTHER" id="PTHR33515:SF1">
    <property type="entry name" value="RIBOSOME-BINDING FACTOR A, CHLOROPLASTIC-RELATED"/>
    <property type="match status" value="1"/>
</dbReference>
<dbReference type="Pfam" id="PF02033">
    <property type="entry name" value="RBFA"/>
    <property type="match status" value="1"/>
</dbReference>
<dbReference type="SUPFAM" id="SSF89919">
    <property type="entry name" value="Ribosome-binding factor A, RbfA"/>
    <property type="match status" value="1"/>
</dbReference>
<name>RBFA_BURP6</name>
<reference key="1">
    <citation type="journal article" date="2010" name="Genome Biol. Evol.">
        <title>Continuing evolution of Burkholderia mallei through genome reduction and large-scale rearrangements.</title>
        <authorList>
            <person name="Losada L."/>
            <person name="Ronning C.M."/>
            <person name="DeShazer D."/>
            <person name="Woods D."/>
            <person name="Fedorova N."/>
            <person name="Kim H.S."/>
            <person name="Shabalina S.A."/>
            <person name="Pearson T.R."/>
            <person name="Brinkac L."/>
            <person name="Tan P."/>
            <person name="Nandi T."/>
            <person name="Crabtree J."/>
            <person name="Badger J."/>
            <person name="Beckstrom-Sternberg S."/>
            <person name="Saqib M."/>
            <person name="Schutzer S.E."/>
            <person name="Keim P."/>
            <person name="Nierman W.C."/>
        </authorList>
    </citation>
    <scope>NUCLEOTIDE SEQUENCE [LARGE SCALE GENOMIC DNA]</scope>
    <source>
        <strain>668</strain>
    </source>
</reference>
<feature type="chain" id="PRO_0000321209" description="Ribosome-binding factor A">
    <location>
        <begin position="1"/>
        <end position="122"/>
    </location>
</feature>